<proteinExistence type="evidence at transcript level"/>
<organism>
    <name type="scientific">Arabidopsis thaliana</name>
    <name type="common">Mouse-ear cress</name>
    <dbReference type="NCBI Taxonomy" id="3702"/>
    <lineage>
        <taxon>Eukaryota</taxon>
        <taxon>Viridiplantae</taxon>
        <taxon>Streptophyta</taxon>
        <taxon>Embryophyta</taxon>
        <taxon>Tracheophyta</taxon>
        <taxon>Spermatophyta</taxon>
        <taxon>Magnoliopsida</taxon>
        <taxon>eudicotyledons</taxon>
        <taxon>Gunneridae</taxon>
        <taxon>Pentapetalae</taxon>
        <taxon>rosids</taxon>
        <taxon>malvids</taxon>
        <taxon>Brassicales</taxon>
        <taxon>Brassicaceae</taxon>
        <taxon>Camelineae</taxon>
        <taxon>Arabidopsis</taxon>
    </lineage>
</organism>
<protein>
    <recommendedName>
        <fullName>Jacalin-related lectin 11</fullName>
    </recommendedName>
</protein>
<sequence length="444" mass="48524">MALKVEAKGGKVGIQWDDGSDYHDVTKIYVRGGLEGIQFIKFEYVKAGKKVIGPIHGASGRGFTETFEINNLEKEYLLSIEGYYNASTGVIQCLQFITNKKTYDPIGYNEGARFTLSASRSKIIGFHGFADKYLNSLGAYFIKIPSIQSAIEGAKTTGKGFDDGGDYDGIRKVYVTTDGSAIRHVRFDYDKAGQVETRERGAKTGTQHEFTVNHPYEYITSVEGTYAHTQPYNCVVLTSLTFKTSKGRASPAIGKVTGSKFKLERQGDAIVGFHGRVGSCIDGIGVYYAPLPPSPPPPEKLQGQGGDGGDSWDDGAFKNVKKIYVGQGDVGIAAVKFEYETYTSEVILAERHGKETLLGYEEFELDYPSEYITAVEGCHDKVIGSETGVITMLRFKTNKRNSPPFGLESAFSFILEKDGHKIVGFHGKASTLLHQIGVHVTAIA</sequence>
<feature type="initiator methionine" description="Removed" evidence="1">
    <location>
        <position position="1"/>
    </location>
</feature>
<feature type="chain" id="PRO_0000430378" description="Jacalin-related lectin 11">
    <location>
        <begin position="2"/>
        <end position="444"/>
    </location>
</feature>
<feature type="domain" description="Jacalin-type lectin 1" evidence="2">
    <location>
        <begin position="2"/>
        <end position="143"/>
    </location>
</feature>
<feature type="domain" description="Jacalin-type lectin 2" evidence="2">
    <location>
        <begin position="146"/>
        <end position="290"/>
    </location>
</feature>
<feature type="domain" description="Jacalin-type lectin 3" evidence="2">
    <location>
        <begin position="298"/>
        <end position="442"/>
    </location>
</feature>
<feature type="modified residue" description="N-acetylalanine" evidence="1">
    <location>
        <position position="2"/>
    </location>
</feature>
<feature type="splice variant" id="VSP_056714" description="In isoform 2." evidence="3">
    <original>EFELDYPS</original>
    <variation>D</variation>
    <location>
        <begin position="362"/>
        <end position="369"/>
    </location>
</feature>
<gene>
    <name type="primary">JAL11</name>
    <name type="ordered locus">At1g52100</name>
    <name type="ORF">F5F19.16</name>
</gene>
<keyword id="KW-0007">Acetylation</keyword>
<keyword id="KW-0025">Alternative splicing</keyword>
<keyword id="KW-0430">Lectin</keyword>
<keyword id="KW-1185">Reference proteome</keyword>
<keyword id="KW-0677">Repeat</keyword>
<dbReference type="EMBL" id="AC006216">
    <property type="protein sequence ID" value="AAD12684.1"/>
    <property type="status" value="ALT_SEQ"/>
    <property type="molecule type" value="Genomic_DNA"/>
</dbReference>
<dbReference type="EMBL" id="CP002684">
    <property type="protein sequence ID" value="AEE32754.1"/>
    <property type="molecule type" value="Genomic_DNA"/>
</dbReference>
<dbReference type="EMBL" id="CP002684">
    <property type="protein sequence ID" value="AEE32755.1"/>
    <property type="status" value="ALT_SEQ"/>
    <property type="molecule type" value="Genomic_DNA"/>
</dbReference>
<dbReference type="EMBL" id="BT015734">
    <property type="protein sequence ID" value="AAU84671.1"/>
    <property type="molecule type" value="mRNA"/>
</dbReference>
<dbReference type="EMBL" id="BT020176">
    <property type="protein sequence ID" value="AAV43778.1"/>
    <property type="molecule type" value="mRNA"/>
</dbReference>
<dbReference type="EMBL" id="AK229056">
    <property type="protein sequence ID" value="BAF00938.1"/>
    <property type="molecule type" value="mRNA"/>
</dbReference>
<dbReference type="PIR" id="H96560">
    <property type="entry name" value="H96560"/>
</dbReference>
<dbReference type="RefSeq" id="NP_001185202.1">
    <property type="nucleotide sequence ID" value="NM_001198273.2"/>
</dbReference>
<dbReference type="RefSeq" id="NP_001323242.1">
    <property type="nucleotide sequence ID" value="NM_001333527.1"/>
</dbReference>
<dbReference type="RefSeq" id="NP_175622.3">
    <molecule id="Q5XF82-2"/>
    <property type="nucleotide sequence ID" value="NM_104091.3"/>
</dbReference>
<dbReference type="SMR" id="Q5XF82"/>
<dbReference type="BioGRID" id="26865">
    <property type="interactions" value="1"/>
</dbReference>
<dbReference type="FunCoup" id="Q5XF82">
    <property type="interactions" value="13"/>
</dbReference>
<dbReference type="IntAct" id="Q5XF82">
    <property type="interactions" value="1"/>
</dbReference>
<dbReference type="STRING" id="3702.Q5XF82"/>
<dbReference type="iPTMnet" id="Q5XF82"/>
<dbReference type="PaxDb" id="3702-AT1G52100.1"/>
<dbReference type="PeptideAtlas" id="Q5XF82"/>
<dbReference type="ProteomicsDB" id="232255">
    <molecule id="Q5XF82-1"/>
</dbReference>
<dbReference type="EnsemblPlants" id="AT1G52100.1">
    <molecule id="Q5XF82-2"/>
    <property type="protein sequence ID" value="AT1G52100.1"/>
    <property type="gene ID" value="AT1G52100"/>
</dbReference>
<dbReference type="GeneID" id="841640"/>
<dbReference type="Gramene" id="AT1G52100.1">
    <molecule id="Q5XF82-2"/>
    <property type="protein sequence ID" value="AT1G52100.1"/>
    <property type="gene ID" value="AT1G52100"/>
</dbReference>
<dbReference type="KEGG" id="ath:AT1G52100"/>
<dbReference type="Araport" id="AT1G52100"/>
<dbReference type="TAIR" id="AT1G52100"/>
<dbReference type="HOGENOM" id="CLU_041730_0_0_1"/>
<dbReference type="InParanoid" id="Q5XF82"/>
<dbReference type="OMA" id="FGHESAC"/>
<dbReference type="OrthoDB" id="4325201at2759"/>
<dbReference type="PRO" id="PR:Q5XF82"/>
<dbReference type="Proteomes" id="UP000006548">
    <property type="component" value="Chromosome 1"/>
</dbReference>
<dbReference type="ExpressionAtlas" id="Q5XF82">
    <property type="expression patterns" value="baseline and differential"/>
</dbReference>
<dbReference type="GO" id="GO:0030246">
    <property type="term" value="F:carbohydrate binding"/>
    <property type="evidence" value="ECO:0007669"/>
    <property type="project" value="UniProtKB-KW"/>
</dbReference>
<dbReference type="CDD" id="cd09612">
    <property type="entry name" value="Jacalin"/>
    <property type="match status" value="3"/>
</dbReference>
<dbReference type="FunFam" id="2.100.10.30:FF:000001">
    <property type="entry name" value="Jacalin-related lectin 33"/>
    <property type="match status" value="3"/>
</dbReference>
<dbReference type="Gene3D" id="2.100.10.30">
    <property type="entry name" value="Jacalin-like lectin domain"/>
    <property type="match status" value="3"/>
</dbReference>
<dbReference type="InterPro" id="IPR001229">
    <property type="entry name" value="Jacalin-like_lectin_dom"/>
</dbReference>
<dbReference type="InterPro" id="IPR033734">
    <property type="entry name" value="Jacalin-like_lectin_dom_plant"/>
</dbReference>
<dbReference type="InterPro" id="IPR036404">
    <property type="entry name" value="Jacalin-like_lectin_dom_sf"/>
</dbReference>
<dbReference type="PANTHER" id="PTHR47293:SF66">
    <property type="entry name" value="JACALIN-RELATED LECTIN 11-RELATED"/>
    <property type="match status" value="1"/>
</dbReference>
<dbReference type="PANTHER" id="PTHR47293">
    <property type="entry name" value="JACALIN-RELATED LECTIN 3"/>
    <property type="match status" value="1"/>
</dbReference>
<dbReference type="Pfam" id="PF01419">
    <property type="entry name" value="Jacalin"/>
    <property type="match status" value="3"/>
</dbReference>
<dbReference type="SMART" id="SM00915">
    <property type="entry name" value="Jacalin"/>
    <property type="match status" value="3"/>
</dbReference>
<dbReference type="SUPFAM" id="SSF51101">
    <property type="entry name" value="Mannose-binding lectins"/>
    <property type="match status" value="3"/>
</dbReference>
<dbReference type="PROSITE" id="PS51752">
    <property type="entry name" value="JACALIN_LECTIN"/>
    <property type="match status" value="3"/>
</dbReference>
<accession>Q5XF82</accession>
<accession>F4IB98</accession>
<accession>F4IB99</accession>
<accession>Q9ZU16</accession>
<comment type="alternative products">
    <event type="alternative splicing"/>
    <isoform>
        <id>Q5XF82-1</id>
        <name>1</name>
        <sequence type="displayed"/>
    </isoform>
    <isoform>
        <id>Q5XF82-2</id>
        <name>2</name>
        <sequence type="described" ref="VSP_056714"/>
    </isoform>
</comment>
<comment type="similarity">
    <text evidence="2 3">Belongs to the jacalin lectin family.</text>
</comment>
<comment type="sequence caution" evidence="3">
    <conflict type="erroneous gene model prediction">
        <sequence resource="EMBL-CDS" id="AAD12684"/>
    </conflict>
</comment>
<comment type="sequence caution" evidence="3">
    <conflict type="erroneous gene model prediction">
        <sequence resource="EMBL-CDS" id="AEE32755"/>
    </conflict>
</comment>
<name>JAL11_ARATH</name>
<reference key="1">
    <citation type="journal article" date="2000" name="Nature">
        <title>Sequence and analysis of chromosome 1 of the plant Arabidopsis thaliana.</title>
        <authorList>
            <person name="Theologis A."/>
            <person name="Ecker J.R."/>
            <person name="Palm C.J."/>
            <person name="Federspiel N.A."/>
            <person name="Kaul S."/>
            <person name="White O."/>
            <person name="Alonso J."/>
            <person name="Altafi H."/>
            <person name="Araujo R."/>
            <person name="Bowman C.L."/>
            <person name="Brooks S.Y."/>
            <person name="Buehler E."/>
            <person name="Chan A."/>
            <person name="Chao Q."/>
            <person name="Chen H."/>
            <person name="Cheuk R.F."/>
            <person name="Chin C.W."/>
            <person name="Chung M.K."/>
            <person name="Conn L."/>
            <person name="Conway A.B."/>
            <person name="Conway A.R."/>
            <person name="Creasy T.H."/>
            <person name="Dewar K."/>
            <person name="Dunn P."/>
            <person name="Etgu P."/>
            <person name="Feldblyum T.V."/>
            <person name="Feng J.-D."/>
            <person name="Fong B."/>
            <person name="Fujii C.Y."/>
            <person name="Gill J.E."/>
            <person name="Goldsmith A.D."/>
            <person name="Haas B."/>
            <person name="Hansen N.F."/>
            <person name="Hughes B."/>
            <person name="Huizar L."/>
            <person name="Hunter J.L."/>
            <person name="Jenkins J."/>
            <person name="Johnson-Hopson C."/>
            <person name="Khan S."/>
            <person name="Khaykin E."/>
            <person name="Kim C.J."/>
            <person name="Koo H.L."/>
            <person name="Kremenetskaia I."/>
            <person name="Kurtz D.B."/>
            <person name="Kwan A."/>
            <person name="Lam B."/>
            <person name="Langin-Hooper S."/>
            <person name="Lee A."/>
            <person name="Lee J.M."/>
            <person name="Lenz C.A."/>
            <person name="Li J.H."/>
            <person name="Li Y.-P."/>
            <person name="Lin X."/>
            <person name="Liu S.X."/>
            <person name="Liu Z.A."/>
            <person name="Luros J.S."/>
            <person name="Maiti R."/>
            <person name="Marziali A."/>
            <person name="Militscher J."/>
            <person name="Miranda M."/>
            <person name="Nguyen M."/>
            <person name="Nierman W.C."/>
            <person name="Osborne B.I."/>
            <person name="Pai G."/>
            <person name="Peterson J."/>
            <person name="Pham P.K."/>
            <person name="Rizzo M."/>
            <person name="Rooney T."/>
            <person name="Rowley D."/>
            <person name="Sakano H."/>
            <person name="Salzberg S.L."/>
            <person name="Schwartz J.R."/>
            <person name="Shinn P."/>
            <person name="Southwick A.M."/>
            <person name="Sun H."/>
            <person name="Tallon L.J."/>
            <person name="Tambunga G."/>
            <person name="Toriumi M.J."/>
            <person name="Town C.D."/>
            <person name="Utterback T."/>
            <person name="Van Aken S."/>
            <person name="Vaysberg M."/>
            <person name="Vysotskaia V.S."/>
            <person name="Walker M."/>
            <person name="Wu D."/>
            <person name="Yu G."/>
            <person name="Fraser C.M."/>
            <person name="Venter J.C."/>
            <person name="Davis R.W."/>
        </authorList>
    </citation>
    <scope>NUCLEOTIDE SEQUENCE [LARGE SCALE GENOMIC DNA]</scope>
    <source>
        <strain>cv. Columbia</strain>
    </source>
</reference>
<reference key="2">
    <citation type="journal article" date="2017" name="Plant J.">
        <title>Araport11: a complete reannotation of the Arabidopsis thaliana reference genome.</title>
        <authorList>
            <person name="Cheng C.Y."/>
            <person name="Krishnakumar V."/>
            <person name="Chan A.P."/>
            <person name="Thibaud-Nissen F."/>
            <person name="Schobel S."/>
            <person name="Town C.D."/>
        </authorList>
    </citation>
    <scope>GENOME REANNOTATION</scope>
    <source>
        <strain>cv. Columbia</strain>
    </source>
</reference>
<reference key="3">
    <citation type="submission" date="2004-09" db="EMBL/GenBank/DDBJ databases">
        <title>Arabidopsis cDNA clones.</title>
        <authorList>
            <person name="Shinn P."/>
            <person name="Chen H."/>
            <person name="Cheuk R."/>
            <person name="Kim C.J."/>
            <person name="Ecker J.R."/>
        </authorList>
    </citation>
    <scope>NUCLEOTIDE SEQUENCE [LARGE SCALE MRNA] (ISOFORM 1)</scope>
</reference>
<reference key="4">
    <citation type="submission" date="2004-11" db="EMBL/GenBank/DDBJ databases">
        <title>Arabidopsis ORF clones.</title>
        <authorList>
            <person name="Shinn P."/>
            <person name="Chen H."/>
            <person name="Cheuk R."/>
            <person name="Kim C.J."/>
            <person name="Ecker J.R."/>
        </authorList>
    </citation>
    <scope>NUCLEOTIDE SEQUENCE [LARGE SCALE MRNA] (ISOFORM 1)</scope>
</reference>
<reference key="5">
    <citation type="submission" date="2006-07" db="EMBL/GenBank/DDBJ databases">
        <title>Large-scale analysis of RIKEN Arabidopsis full-length (RAFL) cDNAs.</title>
        <authorList>
            <person name="Totoki Y."/>
            <person name="Seki M."/>
            <person name="Ishida J."/>
            <person name="Nakajima M."/>
            <person name="Enju A."/>
            <person name="Morosawa T."/>
            <person name="Kamiya A."/>
            <person name="Narusaka M."/>
            <person name="Shin-i T."/>
            <person name="Nakagawa M."/>
            <person name="Sakamoto N."/>
            <person name="Oishi K."/>
            <person name="Kohara Y."/>
            <person name="Kobayashi M."/>
            <person name="Toyoda A."/>
            <person name="Sakaki Y."/>
            <person name="Sakurai T."/>
            <person name="Iida K."/>
            <person name="Akiyama K."/>
            <person name="Satou M."/>
            <person name="Toyoda T."/>
            <person name="Konagaya A."/>
            <person name="Carninci P."/>
            <person name="Kawai J."/>
            <person name="Hayashizaki Y."/>
            <person name="Shinozaki K."/>
        </authorList>
    </citation>
    <scope>NUCLEOTIDE SEQUENCE [LARGE SCALE MRNA] (ISOFORM 1)</scope>
</reference>
<reference key="6">
    <citation type="journal article" date="2008" name="Plant Cell Physiol.">
        <title>Antagonistic jacalin-related lectins regulate the size of ER body-type beta-glucosidase complexes in Arabidopsis thaliana.</title>
        <authorList>
            <person name="Nagano A.J."/>
            <person name="Fukao Y."/>
            <person name="Fujiwara M."/>
            <person name="Nishimura M."/>
            <person name="Hara-Nishimura I."/>
        </authorList>
    </citation>
    <scope>GENE FAMILY</scope>
    <scope>NOMENCLATURE</scope>
</reference>
<evidence type="ECO:0000250" key="1">
    <source>
        <dbReference type="UniProtKB" id="Q9FGC5"/>
    </source>
</evidence>
<evidence type="ECO:0000255" key="2">
    <source>
        <dbReference type="PROSITE-ProRule" id="PRU01088"/>
    </source>
</evidence>
<evidence type="ECO:0000305" key="3"/>